<keyword id="KW-0687">Ribonucleoprotein</keyword>
<keyword id="KW-0689">Ribosomal protein</keyword>
<reference key="1">
    <citation type="submission" date="2009-01" db="EMBL/GenBank/DDBJ databases">
        <title>Complete sequence of Anaeromyxobacter dehalogenans 2CP-1.</title>
        <authorList>
            <person name="Lucas S."/>
            <person name="Copeland A."/>
            <person name="Lapidus A."/>
            <person name="Glavina del Rio T."/>
            <person name="Dalin E."/>
            <person name="Tice H."/>
            <person name="Bruce D."/>
            <person name="Goodwin L."/>
            <person name="Pitluck S."/>
            <person name="Saunders E."/>
            <person name="Brettin T."/>
            <person name="Detter J.C."/>
            <person name="Han C."/>
            <person name="Larimer F."/>
            <person name="Land M."/>
            <person name="Hauser L."/>
            <person name="Kyrpides N."/>
            <person name="Ovchinnikova G."/>
            <person name="Beliaev A.S."/>
            <person name="Richardson P."/>
        </authorList>
    </citation>
    <scope>NUCLEOTIDE SEQUENCE [LARGE SCALE GENOMIC DNA]</scope>
    <source>
        <strain>2CP-1 / ATCC BAA-258</strain>
    </source>
</reference>
<evidence type="ECO:0000255" key="1">
    <source>
        <dbReference type="HAMAP-Rule" id="MF_01371"/>
    </source>
</evidence>
<evidence type="ECO:0000305" key="2"/>
<accession>B8J878</accession>
<gene>
    <name evidence="1" type="primary">rpmD</name>
    <name type="ordered locus">A2cp1_2036</name>
</gene>
<organism>
    <name type="scientific">Anaeromyxobacter dehalogenans (strain 2CP-1 / ATCC BAA-258)</name>
    <dbReference type="NCBI Taxonomy" id="455488"/>
    <lineage>
        <taxon>Bacteria</taxon>
        <taxon>Pseudomonadati</taxon>
        <taxon>Myxococcota</taxon>
        <taxon>Myxococcia</taxon>
        <taxon>Myxococcales</taxon>
        <taxon>Cystobacterineae</taxon>
        <taxon>Anaeromyxobacteraceae</taxon>
        <taxon>Anaeromyxobacter</taxon>
    </lineage>
</organism>
<feature type="chain" id="PRO_1000184120" description="Large ribosomal subunit protein uL30">
    <location>
        <begin position="1"/>
        <end position="76"/>
    </location>
</feature>
<comment type="subunit">
    <text evidence="1">Part of the 50S ribosomal subunit.</text>
</comment>
<comment type="similarity">
    <text evidence="1">Belongs to the universal ribosomal protein uL30 family.</text>
</comment>
<name>RL30_ANAD2</name>
<sequence length="76" mass="8286">MAAIKVKLVRGLAGCPWPHRVIVEGLGLKKRESTKLLPDTPQTLGMIAKVSYLVEWERVDAAPPPGRKARKAAARS</sequence>
<proteinExistence type="inferred from homology"/>
<dbReference type="EMBL" id="CP001359">
    <property type="protein sequence ID" value="ACL65377.1"/>
    <property type="molecule type" value="Genomic_DNA"/>
</dbReference>
<dbReference type="RefSeq" id="WP_011420982.1">
    <property type="nucleotide sequence ID" value="NC_011891.1"/>
</dbReference>
<dbReference type="SMR" id="B8J878"/>
<dbReference type="KEGG" id="acp:A2cp1_2036"/>
<dbReference type="HOGENOM" id="CLU_131047_2_1_7"/>
<dbReference type="Proteomes" id="UP000007089">
    <property type="component" value="Chromosome"/>
</dbReference>
<dbReference type="GO" id="GO:0015934">
    <property type="term" value="C:large ribosomal subunit"/>
    <property type="evidence" value="ECO:0007669"/>
    <property type="project" value="InterPro"/>
</dbReference>
<dbReference type="GO" id="GO:0003735">
    <property type="term" value="F:structural constituent of ribosome"/>
    <property type="evidence" value="ECO:0007669"/>
    <property type="project" value="InterPro"/>
</dbReference>
<dbReference type="GO" id="GO:0006412">
    <property type="term" value="P:translation"/>
    <property type="evidence" value="ECO:0007669"/>
    <property type="project" value="InterPro"/>
</dbReference>
<dbReference type="CDD" id="cd01658">
    <property type="entry name" value="Ribosomal_L30"/>
    <property type="match status" value="1"/>
</dbReference>
<dbReference type="Gene3D" id="3.30.1390.20">
    <property type="entry name" value="Ribosomal protein L30, ferredoxin-like fold domain"/>
    <property type="match status" value="1"/>
</dbReference>
<dbReference type="HAMAP" id="MF_01371_B">
    <property type="entry name" value="Ribosomal_uL30_B"/>
    <property type="match status" value="1"/>
</dbReference>
<dbReference type="InterPro" id="IPR036919">
    <property type="entry name" value="Ribo_uL30_ferredoxin-like_sf"/>
</dbReference>
<dbReference type="InterPro" id="IPR005996">
    <property type="entry name" value="Ribosomal_uL30_bac-type"/>
</dbReference>
<dbReference type="InterPro" id="IPR016082">
    <property type="entry name" value="Ribosomal_uL30_ferredoxin-like"/>
</dbReference>
<dbReference type="NCBIfam" id="TIGR01308">
    <property type="entry name" value="rpmD_bact"/>
    <property type="match status" value="1"/>
</dbReference>
<dbReference type="Pfam" id="PF00327">
    <property type="entry name" value="Ribosomal_L30"/>
    <property type="match status" value="1"/>
</dbReference>
<dbReference type="SUPFAM" id="SSF55129">
    <property type="entry name" value="Ribosomal protein L30p/L7e"/>
    <property type="match status" value="1"/>
</dbReference>
<protein>
    <recommendedName>
        <fullName evidence="1">Large ribosomal subunit protein uL30</fullName>
    </recommendedName>
    <alternativeName>
        <fullName evidence="2">50S ribosomal protein L30</fullName>
    </alternativeName>
</protein>